<feature type="chain" id="PRO_0000273761" description="Large ribosomal subunit protein uL30">
    <location>
        <begin position="1"/>
        <end position="60"/>
    </location>
</feature>
<proteinExistence type="inferred from homology"/>
<accession>Q39KE9</accession>
<comment type="subunit">
    <text evidence="1">Part of the 50S ribosomal subunit.</text>
</comment>
<comment type="similarity">
    <text evidence="1">Belongs to the universal ribosomal protein uL30 family.</text>
</comment>
<gene>
    <name evidence="1" type="primary">rpmD</name>
    <name type="ordered locus">Bcep18194_A3465</name>
</gene>
<reference key="1">
    <citation type="submission" date="2005-10" db="EMBL/GenBank/DDBJ databases">
        <title>Complete sequence of chromosome 1 of Burkholderia sp. 383.</title>
        <authorList>
            <consortium name="US DOE Joint Genome Institute"/>
            <person name="Copeland A."/>
            <person name="Lucas S."/>
            <person name="Lapidus A."/>
            <person name="Barry K."/>
            <person name="Detter J.C."/>
            <person name="Glavina T."/>
            <person name="Hammon N."/>
            <person name="Israni S."/>
            <person name="Pitluck S."/>
            <person name="Chain P."/>
            <person name="Malfatti S."/>
            <person name="Shin M."/>
            <person name="Vergez L."/>
            <person name="Schmutz J."/>
            <person name="Larimer F."/>
            <person name="Land M."/>
            <person name="Kyrpides N."/>
            <person name="Lykidis A."/>
            <person name="Richardson P."/>
        </authorList>
    </citation>
    <scope>NUCLEOTIDE SEQUENCE [LARGE SCALE GENOMIC DNA]</scope>
    <source>
        <strain>ATCC 17760 / DSM 23089 / LMG 22485 / NCIMB 9086 / R18194 / 383</strain>
    </source>
</reference>
<keyword id="KW-0687">Ribonucleoprotein</keyword>
<keyword id="KW-0689">Ribosomal protein</keyword>
<protein>
    <recommendedName>
        <fullName evidence="1">Large ribosomal subunit protein uL30</fullName>
    </recommendedName>
    <alternativeName>
        <fullName evidence="2">50S ribosomal protein L30</fullName>
    </alternativeName>
</protein>
<organism>
    <name type="scientific">Burkholderia lata (strain ATCC 17760 / DSM 23089 / LMG 22485 / NCIMB 9086 / R18194 / 383)</name>
    <dbReference type="NCBI Taxonomy" id="482957"/>
    <lineage>
        <taxon>Bacteria</taxon>
        <taxon>Pseudomonadati</taxon>
        <taxon>Pseudomonadota</taxon>
        <taxon>Betaproteobacteria</taxon>
        <taxon>Burkholderiales</taxon>
        <taxon>Burkholderiaceae</taxon>
        <taxon>Burkholderia</taxon>
        <taxon>Burkholderia cepacia complex</taxon>
    </lineage>
</organism>
<evidence type="ECO:0000255" key="1">
    <source>
        <dbReference type="HAMAP-Rule" id="MF_01371"/>
    </source>
</evidence>
<evidence type="ECO:0000305" key="2"/>
<dbReference type="EMBL" id="CP000151">
    <property type="protein sequence ID" value="ABB07067.1"/>
    <property type="molecule type" value="Genomic_DNA"/>
</dbReference>
<dbReference type="RefSeq" id="WP_006400644.1">
    <property type="nucleotide sequence ID" value="NZ_WNDV01000034.1"/>
</dbReference>
<dbReference type="SMR" id="Q39KE9"/>
<dbReference type="GeneID" id="98107142"/>
<dbReference type="KEGG" id="bur:Bcep18194_A3465"/>
<dbReference type="HOGENOM" id="CLU_131047_1_4_4"/>
<dbReference type="Proteomes" id="UP000002705">
    <property type="component" value="Chromosome 1"/>
</dbReference>
<dbReference type="GO" id="GO:0022625">
    <property type="term" value="C:cytosolic large ribosomal subunit"/>
    <property type="evidence" value="ECO:0007669"/>
    <property type="project" value="TreeGrafter"/>
</dbReference>
<dbReference type="GO" id="GO:0003735">
    <property type="term" value="F:structural constituent of ribosome"/>
    <property type="evidence" value="ECO:0007669"/>
    <property type="project" value="InterPro"/>
</dbReference>
<dbReference type="GO" id="GO:0006412">
    <property type="term" value="P:translation"/>
    <property type="evidence" value="ECO:0007669"/>
    <property type="project" value="UniProtKB-UniRule"/>
</dbReference>
<dbReference type="CDD" id="cd01658">
    <property type="entry name" value="Ribosomal_L30"/>
    <property type="match status" value="1"/>
</dbReference>
<dbReference type="FunFam" id="3.30.1390.20:FF:000001">
    <property type="entry name" value="50S ribosomal protein L30"/>
    <property type="match status" value="1"/>
</dbReference>
<dbReference type="Gene3D" id="3.30.1390.20">
    <property type="entry name" value="Ribosomal protein L30, ferredoxin-like fold domain"/>
    <property type="match status" value="1"/>
</dbReference>
<dbReference type="HAMAP" id="MF_01371_B">
    <property type="entry name" value="Ribosomal_uL30_B"/>
    <property type="match status" value="1"/>
</dbReference>
<dbReference type="InterPro" id="IPR036919">
    <property type="entry name" value="Ribo_uL30_ferredoxin-like_sf"/>
</dbReference>
<dbReference type="InterPro" id="IPR005996">
    <property type="entry name" value="Ribosomal_uL30_bac-type"/>
</dbReference>
<dbReference type="InterPro" id="IPR016082">
    <property type="entry name" value="Ribosomal_uL30_ferredoxin-like"/>
</dbReference>
<dbReference type="NCBIfam" id="TIGR01308">
    <property type="entry name" value="rpmD_bact"/>
    <property type="match status" value="1"/>
</dbReference>
<dbReference type="PANTHER" id="PTHR15892:SF2">
    <property type="entry name" value="LARGE RIBOSOMAL SUBUNIT PROTEIN UL30M"/>
    <property type="match status" value="1"/>
</dbReference>
<dbReference type="PANTHER" id="PTHR15892">
    <property type="entry name" value="MITOCHONDRIAL RIBOSOMAL PROTEIN L30"/>
    <property type="match status" value="1"/>
</dbReference>
<dbReference type="Pfam" id="PF00327">
    <property type="entry name" value="Ribosomal_L30"/>
    <property type="match status" value="1"/>
</dbReference>
<dbReference type="PIRSF" id="PIRSF002211">
    <property type="entry name" value="Ribosomal_L30_bac-type"/>
    <property type="match status" value="1"/>
</dbReference>
<dbReference type="SUPFAM" id="SSF55129">
    <property type="entry name" value="Ribosomal protein L30p/L7e"/>
    <property type="match status" value="1"/>
</dbReference>
<sequence>MSEKTVKVQLVKSLIGTRESHRATVRGLGLRRLNSVSELQDTPAVRGMINKVSYLVKVIA</sequence>
<name>RL30_BURL3</name>